<sequence length="282" mass="32333">MSVYDKHQALSGLTLGKPTPYHDRYDAALLQPVPRSLNRDPLGIHPDSLPFHGADIWTLYELSWLNNRGVPQVAVGEMHLNAESLNLIESKSFKLYLNSFNQTTFDSWESVRATLANDLAHCAQGDVSITLFKLSELEGQPLAGFTGECIDDQDIQIDSYDFNADYLATNEQDAPVVEETLVSHLLKSNCLITHQPDWGSVQIHYRGKRINREALLRYIISFRHHNEFHEQCVERIFNDIMRYYQPEKLSVYARYTRRGGLDINPWRSNTAFNAPNGRLPRQ</sequence>
<proteinExistence type="inferred from homology"/>
<comment type="function">
    <text evidence="1">Catalyzes the NADPH-dependent reduction of 7-cyano-7-deazaguanine (preQ0) to 7-aminomethyl-7-deazaguanine (preQ1).</text>
</comment>
<comment type="catalytic activity">
    <reaction evidence="1">
        <text>7-aminomethyl-7-carbaguanine + 2 NADP(+) = 7-cyano-7-deazaguanine + 2 NADPH + 3 H(+)</text>
        <dbReference type="Rhea" id="RHEA:13409"/>
        <dbReference type="ChEBI" id="CHEBI:15378"/>
        <dbReference type="ChEBI" id="CHEBI:45075"/>
        <dbReference type="ChEBI" id="CHEBI:57783"/>
        <dbReference type="ChEBI" id="CHEBI:58349"/>
        <dbReference type="ChEBI" id="CHEBI:58703"/>
        <dbReference type="EC" id="1.7.1.13"/>
    </reaction>
</comment>
<comment type="pathway">
    <text evidence="1">tRNA modification; tRNA-queuosine biosynthesis.</text>
</comment>
<comment type="subunit">
    <text evidence="1">Homodimer.</text>
</comment>
<comment type="subcellular location">
    <subcellularLocation>
        <location evidence="1">Cytoplasm</location>
    </subcellularLocation>
</comment>
<comment type="similarity">
    <text evidence="1">Belongs to the GTP cyclohydrolase I family. QueF type 2 subfamily.</text>
</comment>
<accession>C6DAH4</accession>
<reference key="1">
    <citation type="submission" date="2009-07" db="EMBL/GenBank/DDBJ databases">
        <title>Complete sequence of Pectobacterium carotovorum subsp. carotovorum PC1.</title>
        <authorList>
            <consortium name="US DOE Joint Genome Institute"/>
            <person name="Lucas S."/>
            <person name="Copeland A."/>
            <person name="Lapidus A."/>
            <person name="Glavina del Rio T."/>
            <person name="Tice H."/>
            <person name="Bruce D."/>
            <person name="Goodwin L."/>
            <person name="Pitluck S."/>
            <person name="Munk A.C."/>
            <person name="Brettin T."/>
            <person name="Detter J.C."/>
            <person name="Han C."/>
            <person name="Tapia R."/>
            <person name="Larimer F."/>
            <person name="Land M."/>
            <person name="Hauser L."/>
            <person name="Kyrpides N."/>
            <person name="Mikhailova N."/>
            <person name="Balakrishnan V."/>
            <person name="Glasner J."/>
            <person name="Perna N.T."/>
        </authorList>
    </citation>
    <scope>NUCLEOTIDE SEQUENCE [LARGE SCALE GENOMIC DNA]</scope>
    <source>
        <strain>PC1</strain>
    </source>
</reference>
<organism>
    <name type="scientific">Pectobacterium carotovorum subsp. carotovorum (strain PC1)</name>
    <dbReference type="NCBI Taxonomy" id="561230"/>
    <lineage>
        <taxon>Bacteria</taxon>
        <taxon>Pseudomonadati</taxon>
        <taxon>Pseudomonadota</taxon>
        <taxon>Gammaproteobacteria</taxon>
        <taxon>Enterobacterales</taxon>
        <taxon>Pectobacteriaceae</taxon>
        <taxon>Pectobacterium</taxon>
    </lineage>
</organism>
<dbReference type="EC" id="1.7.1.13" evidence="1"/>
<dbReference type="EMBL" id="CP001657">
    <property type="protein sequence ID" value="ACT11982.1"/>
    <property type="molecule type" value="Genomic_DNA"/>
</dbReference>
<dbReference type="RefSeq" id="WP_012773622.1">
    <property type="nucleotide sequence ID" value="NC_012917.1"/>
</dbReference>
<dbReference type="SMR" id="C6DAH4"/>
<dbReference type="STRING" id="561230.PC1_0932"/>
<dbReference type="KEGG" id="pct:PC1_0932"/>
<dbReference type="eggNOG" id="COG0780">
    <property type="taxonomic scope" value="Bacteria"/>
</dbReference>
<dbReference type="eggNOG" id="COG2904">
    <property type="taxonomic scope" value="Bacteria"/>
</dbReference>
<dbReference type="HOGENOM" id="CLU_054738_0_0_6"/>
<dbReference type="OrthoDB" id="9789995at2"/>
<dbReference type="BRENDA" id="1.7.1.13">
    <property type="organism ID" value="7628"/>
</dbReference>
<dbReference type="UniPathway" id="UPA00392"/>
<dbReference type="Proteomes" id="UP000002736">
    <property type="component" value="Chromosome"/>
</dbReference>
<dbReference type="GO" id="GO:0005737">
    <property type="term" value="C:cytoplasm"/>
    <property type="evidence" value="ECO:0007669"/>
    <property type="project" value="UniProtKB-SubCell"/>
</dbReference>
<dbReference type="GO" id="GO:0033739">
    <property type="term" value="F:preQ1 synthase activity"/>
    <property type="evidence" value="ECO:0007669"/>
    <property type="project" value="UniProtKB-UniRule"/>
</dbReference>
<dbReference type="GO" id="GO:0008616">
    <property type="term" value="P:queuosine biosynthetic process"/>
    <property type="evidence" value="ECO:0007669"/>
    <property type="project" value="UniProtKB-UniRule"/>
</dbReference>
<dbReference type="GO" id="GO:0006400">
    <property type="term" value="P:tRNA modification"/>
    <property type="evidence" value="ECO:0007669"/>
    <property type="project" value="UniProtKB-UniRule"/>
</dbReference>
<dbReference type="Gene3D" id="3.30.1130.10">
    <property type="match status" value="2"/>
</dbReference>
<dbReference type="HAMAP" id="MF_00817">
    <property type="entry name" value="QueF_type2"/>
    <property type="match status" value="1"/>
</dbReference>
<dbReference type="InterPro" id="IPR043133">
    <property type="entry name" value="GTP-CH-I_C/QueF"/>
</dbReference>
<dbReference type="InterPro" id="IPR050084">
    <property type="entry name" value="NADPH_dep_7-cyano-7-deazaG_red"/>
</dbReference>
<dbReference type="InterPro" id="IPR029500">
    <property type="entry name" value="QueF"/>
</dbReference>
<dbReference type="InterPro" id="IPR029139">
    <property type="entry name" value="QueF_N"/>
</dbReference>
<dbReference type="InterPro" id="IPR016428">
    <property type="entry name" value="QueF_type2"/>
</dbReference>
<dbReference type="NCBIfam" id="TIGR03138">
    <property type="entry name" value="QueF"/>
    <property type="match status" value="1"/>
</dbReference>
<dbReference type="PANTHER" id="PTHR34354">
    <property type="entry name" value="NADPH-DEPENDENT 7-CYANO-7-DEAZAGUANINE REDUCTASE"/>
    <property type="match status" value="1"/>
</dbReference>
<dbReference type="PANTHER" id="PTHR34354:SF1">
    <property type="entry name" value="NADPH-DEPENDENT 7-CYANO-7-DEAZAGUANINE REDUCTASE"/>
    <property type="match status" value="1"/>
</dbReference>
<dbReference type="Pfam" id="PF14489">
    <property type="entry name" value="QueF"/>
    <property type="match status" value="1"/>
</dbReference>
<dbReference type="Pfam" id="PF14819">
    <property type="entry name" value="QueF_N"/>
    <property type="match status" value="1"/>
</dbReference>
<dbReference type="PIRSF" id="PIRSF004750">
    <property type="entry name" value="Nitrile_oxidored_YqcD_prd"/>
    <property type="match status" value="1"/>
</dbReference>
<dbReference type="SUPFAM" id="SSF55620">
    <property type="entry name" value="Tetrahydrobiopterin biosynthesis enzymes-like"/>
    <property type="match status" value="1"/>
</dbReference>
<keyword id="KW-0963">Cytoplasm</keyword>
<keyword id="KW-0521">NADP</keyword>
<keyword id="KW-0560">Oxidoreductase</keyword>
<keyword id="KW-0671">Queuosine biosynthesis</keyword>
<gene>
    <name evidence="1" type="primary">queF</name>
    <name type="ordered locus">PC1_0932</name>
</gene>
<feature type="chain" id="PRO_1000213071" description="NADPH-dependent 7-cyano-7-deazaguanine reductase">
    <location>
        <begin position="1"/>
        <end position="282"/>
    </location>
</feature>
<feature type="active site" description="Thioimide intermediate" evidence="1">
    <location>
        <position position="190"/>
    </location>
</feature>
<feature type="active site" description="Proton donor" evidence="1">
    <location>
        <position position="197"/>
    </location>
</feature>
<feature type="binding site" evidence="1">
    <location>
        <begin position="88"/>
        <end position="90"/>
    </location>
    <ligand>
        <name>substrate</name>
    </ligand>
</feature>
<feature type="binding site" evidence="1">
    <location>
        <begin position="90"/>
        <end position="91"/>
    </location>
    <ligand>
        <name>NADPH</name>
        <dbReference type="ChEBI" id="CHEBI:57783"/>
    </ligand>
</feature>
<feature type="binding site" evidence="1">
    <location>
        <begin position="229"/>
        <end position="230"/>
    </location>
    <ligand>
        <name>substrate</name>
    </ligand>
</feature>
<feature type="binding site" evidence="1">
    <location>
        <begin position="258"/>
        <end position="259"/>
    </location>
    <ligand>
        <name>NADPH</name>
        <dbReference type="ChEBI" id="CHEBI:57783"/>
    </ligand>
</feature>
<protein>
    <recommendedName>
        <fullName evidence="1">NADPH-dependent 7-cyano-7-deazaguanine reductase</fullName>
        <ecNumber evidence="1">1.7.1.13</ecNumber>
    </recommendedName>
    <alternativeName>
        <fullName evidence="1">7-cyano-7-carbaguanine reductase</fullName>
    </alternativeName>
    <alternativeName>
        <fullName evidence="1">NADPH-dependent nitrile oxidoreductase</fullName>
    </alternativeName>
    <alternativeName>
        <fullName evidence="1">PreQ(0) reductase</fullName>
    </alternativeName>
</protein>
<evidence type="ECO:0000255" key="1">
    <source>
        <dbReference type="HAMAP-Rule" id="MF_00817"/>
    </source>
</evidence>
<name>QUEF_PECCP</name>